<name>UPPP_PSEAB</name>
<keyword id="KW-0046">Antibiotic resistance</keyword>
<keyword id="KW-0997">Cell inner membrane</keyword>
<keyword id="KW-1003">Cell membrane</keyword>
<keyword id="KW-0133">Cell shape</keyword>
<keyword id="KW-0961">Cell wall biogenesis/degradation</keyword>
<keyword id="KW-0378">Hydrolase</keyword>
<keyword id="KW-0472">Membrane</keyword>
<keyword id="KW-0573">Peptidoglycan synthesis</keyword>
<keyword id="KW-0812">Transmembrane</keyword>
<keyword id="KW-1133">Transmembrane helix</keyword>
<evidence type="ECO:0000255" key="1">
    <source>
        <dbReference type="HAMAP-Rule" id="MF_01006"/>
    </source>
</evidence>
<sequence length="277" mass="30738">MEWWTAFQAFILGVVEGLTEFLPISSTGHQIIVADLIGFGGERAKAFNIIIQLAAILAVVWEFRGKIFQVVRDLPSQRQAQRFTANLLIAFFPAVVLGVLFADLIHEWLFNPITVALALVVGGVVMLWAERRKHVIHAEHVDDMTWKDALKIGCAQCLAMVPGTSRSGATIIGGLLFGLSRKAATEFSFFLAMPTMVGAAVYSGYKYRDLFRPEDLPVFAVGFVTSFVFAMVAVRALLKFIGNHSYAAFAWYRIAFGLLILATWQFHLIDWSTAGEM</sequence>
<comment type="function">
    <text evidence="1">Catalyzes the dephosphorylation of undecaprenyl diphosphate (UPP). Confers resistance to bacitracin.</text>
</comment>
<comment type="catalytic activity">
    <reaction evidence="1">
        <text>di-trans,octa-cis-undecaprenyl diphosphate + H2O = di-trans,octa-cis-undecaprenyl phosphate + phosphate + H(+)</text>
        <dbReference type="Rhea" id="RHEA:28094"/>
        <dbReference type="ChEBI" id="CHEBI:15377"/>
        <dbReference type="ChEBI" id="CHEBI:15378"/>
        <dbReference type="ChEBI" id="CHEBI:43474"/>
        <dbReference type="ChEBI" id="CHEBI:58405"/>
        <dbReference type="ChEBI" id="CHEBI:60392"/>
        <dbReference type="EC" id="3.6.1.27"/>
    </reaction>
</comment>
<comment type="subcellular location">
    <subcellularLocation>
        <location evidence="1">Cell inner membrane</location>
        <topology evidence="1">Multi-pass membrane protein</topology>
    </subcellularLocation>
</comment>
<comment type="miscellaneous">
    <text>Bacitracin is thought to be involved in the inhibition of peptidoglycan synthesis by sequestering undecaprenyl diphosphate, thereby reducing the pool of lipid carrier available.</text>
</comment>
<comment type="similarity">
    <text evidence="1">Belongs to the UppP family.</text>
</comment>
<reference key="1">
    <citation type="journal article" date="2006" name="Genome Biol.">
        <title>Genomic analysis reveals that Pseudomonas aeruginosa virulence is combinatorial.</title>
        <authorList>
            <person name="Lee D.G."/>
            <person name="Urbach J.M."/>
            <person name="Wu G."/>
            <person name="Liberati N.T."/>
            <person name="Feinbaum R.L."/>
            <person name="Miyata S."/>
            <person name="Diggins L.T."/>
            <person name="He J."/>
            <person name="Saucier M."/>
            <person name="Deziel E."/>
            <person name="Friedman L."/>
            <person name="Li L."/>
            <person name="Grills G."/>
            <person name="Montgomery K."/>
            <person name="Kucherlapati R."/>
            <person name="Rahme L.G."/>
            <person name="Ausubel F.M."/>
        </authorList>
    </citation>
    <scope>NUCLEOTIDE SEQUENCE [LARGE SCALE GENOMIC DNA]</scope>
    <source>
        <strain>UCBPP-PA14</strain>
    </source>
</reference>
<feature type="chain" id="PRO_0000290751" description="Undecaprenyl-diphosphatase">
    <location>
        <begin position="1"/>
        <end position="277"/>
    </location>
</feature>
<feature type="transmembrane region" description="Helical" evidence="1">
    <location>
        <begin position="47"/>
        <end position="67"/>
    </location>
</feature>
<feature type="transmembrane region" description="Helical" evidence="1">
    <location>
        <begin position="85"/>
        <end position="105"/>
    </location>
</feature>
<feature type="transmembrane region" description="Helical" evidence="1">
    <location>
        <begin position="108"/>
        <end position="128"/>
    </location>
</feature>
<feature type="transmembrane region" description="Helical" evidence="1">
    <location>
        <begin position="183"/>
        <end position="203"/>
    </location>
</feature>
<feature type="transmembrane region" description="Helical" evidence="1">
    <location>
        <begin position="218"/>
        <end position="238"/>
    </location>
</feature>
<feature type="transmembrane region" description="Helical" evidence="1">
    <location>
        <begin position="249"/>
        <end position="269"/>
    </location>
</feature>
<gene>
    <name evidence="1" type="primary">uppP</name>
    <name type="synonym">bacA</name>
    <name type="ordered locus">PA14_39190</name>
</gene>
<accession>Q02LA5</accession>
<proteinExistence type="inferred from homology"/>
<organism>
    <name type="scientific">Pseudomonas aeruginosa (strain UCBPP-PA14)</name>
    <dbReference type="NCBI Taxonomy" id="208963"/>
    <lineage>
        <taxon>Bacteria</taxon>
        <taxon>Pseudomonadati</taxon>
        <taxon>Pseudomonadota</taxon>
        <taxon>Gammaproteobacteria</taxon>
        <taxon>Pseudomonadales</taxon>
        <taxon>Pseudomonadaceae</taxon>
        <taxon>Pseudomonas</taxon>
    </lineage>
</organism>
<protein>
    <recommendedName>
        <fullName evidence="1">Undecaprenyl-diphosphatase</fullName>
        <ecNumber evidence="1">3.6.1.27</ecNumber>
    </recommendedName>
    <alternativeName>
        <fullName evidence="1">Bacitracin resistance protein</fullName>
    </alternativeName>
    <alternativeName>
        <fullName evidence="1">Undecaprenyl pyrophosphate phosphatase</fullName>
    </alternativeName>
</protein>
<dbReference type="EC" id="3.6.1.27" evidence="1"/>
<dbReference type="EMBL" id="CP000438">
    <property type="protein sequence ID" value="ABJ11146.1"/>
    <property type="molecule type" value="Genomic_DNA"/>
</dbReference>
<dbReference type="RefSeq" id="WP_003088326.1">
    <property type="nucleotide sequence ID" value="NZ_CP034244.1"/>
</dbReference>
<dbReference type="SMR" id="Q02LA5"/>
<dbReference type="KEGG" id="pau:PA14_39190"/>
<dbReference type="PseudoCAP" id="PA14_39190"/>
<dbReference type="HOGENOM" id="CLU_060296_2_0_6"/>
<dbReference type="BioCyc" id="PAER208963:G1G74-3290-MONOMER"/>
<dbReference type="Proteomes" id="UP000000653">
    <property type="component" value="Chromosome"/>
</dbReference>
<dbReference type="GO" id="GO:0005886">
    <property type="term" value="C:plasma membrane"/>
    <property type="evidence" value="ECO:0007669"/>
    <property type="project" value="UniProtKB-SubCell"/>
</dbReference>
<dbReference type="GO" id="GO:0050380">
    <property type="term" value="F:undecaprenyl-diphosphatase activity"/>
    <property type="evidence" value="ECO:0007669"/>
    <property type="project" value="UniProtKB-UniRule"/>
</dbReference>
<dbReference type="GO" id="GO:0071555">
    <property type="term" value="P:cell wall organization"/>
    <property type="evidence" value="ECO:0007669"/>
    <property type="project" value="UniProtKB-KW"/>
</dbReference>
<dbReference type="GO" id="GO:0009252">
    <property type="term" value="P:peptidoglycan biosynthetic process"/>
    <property type="evidence" value="ECO:0007669"/>
    <property type="project" value="UniProtKB-KW"/>
</dbReference>
<dbReference type="GO" id="GO:0008360">
    <property type="term" value="P:regulation of cell shape"/>
    <property type="evidence" value="ECO:0007669"/>
    <property type="project" value="UniProtKB-KW"/>
</dbReference>
<dbReference type="GO" id="GO:0046677">
    <property type="term" value="P:response to antibiotic"/>
    <property type="evidence" value="ECO:0007669"/>
    <property type="project" value="UniProtKB-UniRule"/>
</dbReference>
<dbReference type="HAMAP" id="MF_01006">
    <property type="entry name" value="Undec_diphosphatase"/>
    <property type="match status" value="1"/>
</dbReference>
<dbReference type="InterPro" id="IPR003824">
    <property type="entry name" value="UppP"/>
</dbReference>
<dbReference type="NCBIfam" id="NF001389">
    <property type="entry name" value="PRK00281.1-2"/>
    <property type="match status" value="1"/>
</dbReference>
<dbReference type="NCBIfam" id="NF001390">
    <property type="entry name" value="PRK00281.1-4"/>
    <property type="match status" value="1"/>
</dbReference>
<dbReference type="NCBIfam" id="TIGR00753">
    <property type="entry name" value="undec_PP_bacA"/>
    <property type="match status" value="1"/>
</dbReference>
<dbReference type="PANTHER" id="PTHR30622">
    <property type="entry name" value="UNDECAPRENYL-DIPHOSPHATASE"/>
    <property type="match status" value="1"/>
</dbReference>
<dbReference type="PANTHER" id="PTHR30622:SF3">
    <property type="entry name" value="UNDECAPRENYL-DIPHOSPHATASE"/>
    <property type="match status" value="1"/>
</dbReference>
<dbReference type="Pfam" id="PF02673">
    <property type="entry name" value="BacA"/>
    <property type="match status" value="1"/>
</dbReference>